<gene>
    <name type="primary">PG2</name>
    <name type="synonym">PG</name>
    <name type="synonym">PG2A</name>
    <name type="synonym">PG2B</name>
</gene>
<organism>
    <name type="scientific">Solanum lycopersicum</name>
    <name type="common">Tomato</name>
    <name type="synonym">Lycopersicon esculentum</name>
    <dbReference type="NCBI Taxonomy" id="4081"/>
    <lineage>
        <taxon>Eukaryota</taxon>
        <taxon>Viridiplantae</taxon>
        <taxon>Streptophyta</taxon>
        <taxon>Embryophyta</taxon>
        <taxon>Tracheophyta</taxon>
        <taxon>Spermatophyta</taxon>
        <taxon>Magnoliopsida</taxon>
        <taxon>eudicotyledons</taxon>
        <taxon>Gunneridae</taxon>
        <taxon>Pentapetalae</taxon>
        <taxon>asterids</taxon>
        <taxon>lamiids</taxon>
        <taxon>Solanales</taxon>
        <taxon>Solanaceae</taxon>
        <taxon>Solanoideae</taxon>
        <taxon>Solaneae</taxon>
        <taxon>Solanum</taxon>
        <taxon>Solanum subgen. Lycopersicon</taxon>
    </lineage>
</organism>
<feature type="signal peptide" evidence="6">
    <location>
        <begin position="1"/>
        <end position="24"/>
    </location>
</feature>
<feature type="propeptide" id="PRO_0000024804">
    <location>
        <begin position="25"/>
        <end position="71"/>
    </location>
</feature>
<feature type="chain" id="PRO_0000024805" description="Polygalacturonase-2">
    <location>
        <begin position="72"/>
        <end position="444"/>
    </location>
</feature>
<feature type="propeptide" id="PRO_0000043095" evidence="6">
    <location>
        <begin position="445"/>
        <end position="457"/>
    </location>
</feature>
<feature type="repeat" description="PbH1 1">
    <location>
        <begin position="228"/>
        <end position="255"/>
    </location>
</feature>
<feature type="repeat" description="PbH1 2">
    <location>
        <begin position="256"/>
        <end position="277"/>
    </location>
</feature>
<feature type="repeat" description="PbH1 3">
    <location>
        <begin position="309"/>
        <end position="330"/>
    </location>
</feature>
<feature type="repeat" description="PbH1 4">
    <location>
        <begin position="338"/>
        <end position="359"/>
    </location>
</feature>
<feature type="active site" description="Proton donor" evidence="2">
    <location>
        <position position="270"/>
    </location>
</feature>
<feature type="active site" evidence="2">
    <location>
        <position position="293"/>
    </location>
</feature>
<feature type="glycosylation site" description="N-linked (GlcNAc...) asparagine" evidence="1">
    <location>
        <position position="189"/>
    </location>
</feature>
<feature type="glycosylation site" description="N-linked (GlcNAc...) asparagine" evidence="1">
    <location>
        <position position="240"/>
    </location>
</feature>
<feature type="glycosylation site" description="N-linked (GlcNAc...) asparagine" evidence="1">
    <location>
        <position position="286"/>
    </location>
</feature>
<feature type="glycosylation site" description="N-linked (GlcNAc...) asparagine" evidence="1">
    <location>
        <position position="311"/>
    </location>
</feature>
<feature type="sequence conflict" description="In Ref. 1; AA sequence." evidence="17" ref="1">
    <original>E</original>
    <variation>Q</variation>
    <location>
        <position position="96"/>
    </location>
</feature>
<feature type="sequence conflict" description="In Ref. 8; CAD44521." evidence="17" ref="8">
    <original>V</original>
    <variation>E</variation>
    <location>
        <position position="136"/>
    </location>
</feature>
<feature type="sequence conflict" description="In Ref. 8; CAD44521." evidence="17" ref="8">
    <original>G</original>
    <variation>E</variation>
    <location>
        <position position="169"/>
    </location>
</feature>
<proteinExistence type="evidence at protein level"/>
<name>PGLR_SOLLC</name>
<sequence length="457" mass="50052">MVIQRNSILLLIIIFASSISTCRSNVIDDNLFKQVYDNILEQEFAHDFQAYLSYLSKNIESNNNIDKVDKNGIKVINVLSFGAKGDGKTYDNIAFEQAWNEACSSRTPVQFVVPKNKNYLLKQITFSGPCRSSISVKIFGSLEASSKISDYKDRRLWIAFDSVQNLVVGGGGTINGNGQVWWPSSCKINKSLPCRDAPTALTFWNCKNLKVNNLKSKNAQQIHIKFESCTNVVASNLMINASAKSPNTDGVHVSNTQYIQISDTIIGTGDDCISIVSGSQNVQATNITCGPGHGISIGSLGSGNSEAYVSNVTVNEAKIIGAENGVRIKTWQGGSGQASNIKFLNVEMQDVKYPIIIDQNYCDRVEPCIQQFSAVQVKNVVYENIKGTSATKVAIKFDCSTNFPCEGIIMENINLVGESGKPSEATCKNVHFNNAEHVTPHCTSLEISEDEALLYNY</sequence>
<accession>P05117</accession>
<accession>P94004</accession>
<accession>Q70Y18</accession>
<accession>Q7DM56</accession>
<protein>
    <recommendedName>
        <fullName>Polygalacturonase-2</fullName>
        <shortName>PG</shortName>
        <ecNumber evidence="13">3.2.1.15</ecNumber>
    </recommendedName>
    <alternativeName>
        <fullName>PG-2A</fullName>
    </alternativeName>
    <alternativeName>
        <fullName>PG-2B</fullName>
    </alternativeName>
    <alternativeName>
        <fullName>Pectinase</fullName>
    </alternativeName>
</protein>
<keyword id="KW-0052">Apoplast</keyword>
<keyword id="KW-0134">Cell wall</keyword>
<keyword id="KW-0961">Cell wall biogenesis/degradation</keyword>
<keyword id="KW-0903">Direct protein sequencing</keyword>
<keyword id="KW-0292">Fruit ripening</keyword>
<keyword id="KW-0308">Genetically modified food</keyword>
<keyword id="KW-0325">Glycoprotein</keyword>
<keyword id="KW-0326">Glycosidase</keyword>
<keyword id="KW-0378">Hydrolase</keyword>
<keyword id="KW-1185">Reference proteome</keyword>
<keyword id="KW-0677">Repeat</keyword>
<keyword id="KW-0964">Secreted</keyword>
<keyword id="KW-0732">Signal</keyword>
<reference key="1">
    <citation type="journal article" date="1986" name="Nucleic Acids Res.">
        <title>Sequencing and identification of a cDNA clone for tomato polygalacturonase.</title>
        <authorList>
            <person name="Grierson D."/>
            <person name="Tucker G.A."/>
            <person name="Keen J."/>
            <person name="Ray J."/>
            <person name="Bird C.R."/>
            <person name="Schuch W."/>
        </authorList>
    </citation>
    <scope>NUCLEOTIDE SEQUENCE [MRNA]</scope>
    <scope>PROTEIN SEQUENCE OF 72-96</scope>
    <source>
        <strain>cv. Ailsa Craig</strain>
    </source>
</reference>
<reference key="2">
    <citation type="journal article" date="1987" name="Mol. Gen. Genet.">
        <title>Molecular characterization of tomato fruit polygalacturonase.</title>
        <authorList>
            <person name="Sheehy R.E."/>
            <person name="Pearson J."/>
            <person name="Brady C.J."/>
            <person name="Hiatt W.R."/>
        </authorList>
    </citation>
    <scope>NUCLEOTIDE SEQUENCE [MRNA]</scope>
    <scope>PARTIAL PROTEIN SEQUENCE</scope>
    <scope>TISSUE SPECIFICITY</scope>
</reference>
<reference key="3">
    <citation type="submission" date="1987-10" db="EMBL/GenBank/DDBJ databases">
        <authorList>
            <person name="Hiatt W.R."/>
        </authorList>
    </citation>
    <scope>SEQUENCE REVISION</scope>
</reference>
<reference key="4">
    <citation type="journal article" date="1988" name="Plant Mol. Biol.">
        <title>The tomato polygalacturonase gene and ripening-specific expression in transgenic plants.</title>
        <authorList>
            <person name="Bird C.R."/>
            <person name="Smith C.J.S."/>
            <person name="Ray J.A."/>
            <person name="Moureau P."/>
            <person name="Bevan M.W."/>
            <person name="Bird A.S."/>
            <person name="Hughes S."/>
            <person name="Morris P.C."/>
            <person name="Grierson D."/>
            <person name="Schuch W."/>
        </authorList>
        <dbReference type="AGRICOLA" id="IND92000010"/>
    </citation>
    <scope>NUCLEOTIDE SEQUENCE [GENOMIC DNA]</scope>
    <scope>TISSUE SPECIFICITY</scope>
    <source>
        <strain>cv. Ailsa Craig</strain>
    </source>
</reference>
<reference key="5">
    <citation type="patent" date="1988-06-22" number="EP0271988">
        <title>Anti-sense regulation of plant gene expression.</title>
        <authorList>
            <person name="Bridges I.G."/>
            <person name="Schuch W.W."/>
            <person name="Grierson D."/>
        </authorList>
    </citation>
    <scope>NUCLEOTIDE SEQUENCE</scope>
    <source>
        <strain>cv. Ailsa Craig</strain>
    </source>
</reference>
<reference key="6">
    <citation type="journal article" date="1988" name="Plant Physiol.">
        <title>In vitro synthesis and processing of tomato fruit polygalacturonase.</title>
        <authorList>
            <person name="DellaPenna D."/>
            <person name="Bennett A.B."/>
        </authorList>
    </citation>
    <scope>NUCLEOTIDE SEQUENCE [MRNA] OF 1-115</scope>
    <scope>PROTEIN SEQUENCE OF N-TERMINUS</scope>
    <scope>PROTEIN SEQUENCE OF 72-92</scope>
    <scope>GLYCOSYLATION</scope>
</reference>
<reference key="7">
    <citation type="journal article" date="1988" name="Nucleic Acids Res.">
        <title>The nucleotide sequence of the 5' flanking region of a tomato polygalacturonase gene.</title>
        <authorList>
            <person name="Rose R.E."/>
            <person name="Houck C.M."/>
            <person name="Monson E.K."/>
            <person name="DeJesus C.E."/>
            <person name="Sheehy R.E."/>
            <person name="Hiatt W.R."/>
        </authorList>
    </citation>
    <scope>NUCLEOTIDE SEQUENCE [GENOMIC DNA] OF 1-93</scope>
</reference>
<reference key="8">
    <citation type="submission" date="2002-08" db="EMBL/GenBank/DDBJ databases">
        <title>Isolation, cloning and characterization of polygalacturonase gene from fruit tissue of Lycopersicum esculentum cv. Arka vikas.</title>
        <authorList>
            <person name="Saiprasad G.V.S."/>
        </authorList>
    </citation>
    <scope>NUCLEOTIDE SEQUENCE [MRNA] OF 96-294</scope>
    <source>
        <strain>cv. Arka vikas</strain>
        <tissue>Fruit</tissue>
    </source>
</reference>
<reference key="9">
    <citation type="journal article" date="1980" name="Eur. J. Biochem.">
        <title>Changes in polygalacturonase isoenzymes during the 'ripening' of normal and mutant tomato fruit.</title>
        <authorList>
            <person name="Tucker G.A."/>
            <person name="Robertson N.G."/>
            <person name="Grierson D."/>
        </authorList>
    </citation>
    <scope>BIOPHYSICOCHEMICAL PROPERTIES</scope>
    <scope>SUBUNIT</scope>
    <scope>DEVELOPMENTAL STAGE</scope>
</reference>
<reference key="10">
    <citation type="journal article" date="1981" name="Eur. J. Biochem.">
        <title>The conversion of tomato-fruit polygalacturonase isoenzyme 2 into isoenzyme 1 in vitro.</title>
        <authorList>
            <person name="Tucker G.A."/>
            <person name="Robertson N.G."/>
            <person name="Grierson D."/>
        </authorList>
    </citation>
    <scope>SUBUNIT</scope>
</reference>
<reference key="11">
    <citation type="journal article" date="1983" name="Eur. J. Biochem.">
        <title>Carbohydrate composition and electrophoretic properties of tomato polygalacturonase isoenzymes.</title>
        <authorList>
            <person name="Moshrefi M."/>
            <person name="Luh B.S."/>
        </authorList>
    </citation>
    <scope>BIOPHYSICOCHEMICAL PROPERTIES</scope>
    <scope>GLYCOSYLATION</scope>
</reference>
<reference key="12">
    <citation type="journal article" date="1984" name="Eur. J. Biochem.">
        <title>Purification and characterization of tomato polygalacturonase converter.</title>
        <authorList>
            <person name="Pressey R."/>
        </authorList>
    </citation>
    <scope>INTERACTION WITH GP1</scope>
    <scope>BIOPHYSICOCHEMICAL PROPERTIES</scope>
</reference>
<reference key="13">
    <citation type="journal article" date="1990" name="Plant Cell">
        <title>Analysis of tomato polygalacturonase expression in transgenic tobacco.</title>
        <authorList>
            <person name="Osteryoung K.W."/>
            <person name="Toenjes K."/>
            <person name="Hall B."/>
            <person name="Winkler V."/>
            <person name="Bennett A.B."/>
        </authorList>
    </citation>
    <scope>FUNCTION</scope>
    <scope>SUBCELLULAR LOCATION</scope>
    <scope>GLYCOSYLATION</scope>
</reference>
<reference key="14">
    <citation type="journal article" date="1993" name="Planta">
        <title>Accumulation of the beta-subunit of polygalacturonase 1 in normal and mutant tomato fruit.</title>
        <authorList>
            <person name="Pogson B.J."/>
            <person name="Brady C.J."/>
        </authorList>
    </citation>
    <scope>INTERACTION WITH GP1</scope>
</reference>
<reference key="15">
    <citation type="journal article" date="1994" name="Plant Cell">
        <title>Reduction of tomato polygalacturonase beta subunit expression affects pectin solubilization and degradation during fruit ripening.</title>
        <authorList>
            <person name="Watson C.F."/>
            <person name="Zheng L."/>
            <person name="DellaPenna D."/>
        </authorList>
    </citation>
    <scope>FUNCTION</scope>
    <scope>DEVELOPMENTAL STAGE</scope>
</reference>
<reference key="16">
    <citation type="journal article" date="1994" name="Plant Physiol.">
        <title>Differential expression of the two subunits of tomato polygalacturonase isoenzyme 1 in wild-type and in tomato fruit.</title>
        <authorList>
            <person name="Zheng L."/>
            <person name="Watson C.F."/>
            <person name="DellaPenna D."/>
        </authorList>
    </citation>
    <scope>DEVELOPMENTAL STAGE</scope>
    <scope>TISSUE SPECIFICITY</scope>
    <scope>INDUCTION BY ETHYLENE</scope>
</reference>
<reference key="17">
    <citation type="journal article" date="1994" name="Plant Physiol.">
        <title>Tomato fruit polygalacturonase isozyme 1 -- characterization of the beta subunit and its state of assembly in vivo.</title>
        <authorList>
            <person name="Moore T."/>
            <person name="Bennett A.B."/>
        </authorList>
    </citation>
    <scope>SUBUNIT</scope>
    <scope>TISSUE SPECIFICITY</scope>
</reference>
<reference key="18">
    <citation type="journal article" date="1998" name="Plant Mol. Biol.">
        <title>Insertional inactivation of the tomato polygalacturonase gene.</title>
        <authorList>
            <person name="Cooley M.B."/>
            <person name="Yoder J.I."/>
        </authorList>
    </citation>
    <scope>FUNCTION</scope>
</reference>
<reference key="19">
    <citation type="journal article" date="1998" name="Plant Physiol.">
        <title>Polygalacturonase-mediated solubilization and depolymerization of pectic polymers in tomato fruit cell walls. Regulation By ph and ionic conditions.</title>
        <authorList>
            <person name="Chun J.-P."/>
            <person name="Huber D.J."/>
        </authorList>
    </citation>
    <scope>ENZYME ACTIVITY</scope>
</reference>
<reference key="20">
    <citation type="journal article" date="2004" name="Biotechnol. Bioeng.">
        <title>Purified tomato polygalacturonase activity during thermal and high-pressure treatment.</title>
        <authorList>
            <person name="Verlent I."/>
            <person name="van Loey A."/>
            <person name="Smout C."/>
            <person name="Duvetter T."/>
            <person name="Hendrickx M.E."/>
        </authorList>
    </citation>
    <scope>BIOPHYSICOCHEMICAL PROPERTIES</scope>
</reference>
<reference key="21">
    <citation type="journal article" date="2003" name="Acta Crystallogr. D">
        <title>Resolving the space-group ambiguity of crystals of tomato fruit polygalacturonase.</title>
        <authorList>
            <person name="Heffron S."/>
            <person name="Watkins S."/>
            <person name="Moeller R."/>
            <person name="Taban A.H."/>
            <person name="Butowt R."/>
            <person name="DellaPenna D."/>
            <person name="Jurnak F."/>
        </authorList>
    </citation>
    <scope>X-RAY CRYSTALLOGRAPHY (1.87 ANGSTROMS) OF 2-368</scope>
</reference>
<dbReference type="EC" id="3.2.1.15" evidence="13"/>
<dbReference type="EMBL" id="X04583">
    <property type="protein sequence ID" value="CAA28254.1"/>
    <property type="molecule type" value="mRNA"/>
</dbReference>
<dbReference type="EMBL" id="X05656">
    <property type="protein sequence ID" value="CAA29148.1"/>
    <property type="molecule type" value="mRNA"/>
</dbReference>
<dbReference type="EMBL" id="X14074">
    <property type="protein sequence ID" value="CAA32235.1"/>
    <property type="molecule type" value="Genomic_DNA"/>
</dbReference>
<dbReference type="EMBL" id="M37304">
    <property type="protein sequence ID" value="AAA34178.1"/>
    <property type="molecule type" value="Genomic_DNA"/>
</dbReference>
<dbReference type="EMBL" id="A15981">
    <property type="protein sequence ID" value="CAA01256.1"/>
    <property type="molecule type" value="Unassigned_RNA"/>
</dbReference>
<dbReference type="EMBL" id="A24194">
    <property type="protein sequence ID" value="CAA01720.1"/>
    <property type="molecule type" value="Unassigned_DNA"/>
</dbReference>
<dbReference type="EMBL" id="M20269">
    <property type="protein sequence ID" value="AAA34177.1"/>
    <property type="molecule type" value="mRNA"/>
</dbReference>
<dbReference type="EMBL" id="X07410">
    <property type="protein sequence ID" value="CAA30308.1"/>
    <property type="molecule type" value="Genomic_DNA"/>
</dbReference>
<dbReference type="EMBL" id="AJ505947">
    <property type="protein sequence ID" value="CAD44521.1"/>
    <property type="status" value="ALT_FRAME"/>
    <property type="molecule type" value="mRNA"/>
</dbReference>
<dbReference type="PIR" id="A25534">
    <property type="entry name" value="A25534"/>
</dbReference>
<dbReference type="RefSeq" id="NP_001234021.1">
    <property type="nucleotide sequence ID" value="NM_001247092.2"/>
</dbReference>
<dbReference type="SMR" id="P05117"/>
<dbReference type="FunCoup" id="P05117">
    <property type="interactions" value="80"/>
</dbReference>
<dbReference type="STRING" id="4081.P05117"/>
<dbReference type="Allergome" id="6157">
    <property type="allergen name" value="Sola l PG"/>
</dbReference>
<dbReference type="CAZy" id="GH28">
    <property type="family name" value="Glycoside Hydrolase Family 28"/>
</dbReference>
<dbReference type="GlyCosmos" id="P05117">
    <property type="glycosylation" value="4 sites, No reported glycans"/>
</dbReference>
<dbReference type="PaxDb" id="4081-Solyc10g080210.1.1"/>
<dbReference type="EnsemblPlants" id="Solyc10g080210.2.1">
    <property type="protein sequence ID" value="Solyc10g080210.2.1"/>
    <property type="gene ID" value="Solyc10g080210.2"/>
</dbReference>
<dbReference type="GeneID" id="544051"/>
<dbReference type="Gramene" id="Solyc10g080210.2.1">
    <property type="protein sequence ID" value="Solyc10g080210.2.1"/>
    <property type="gene ID" value="Solyc10g080210.2"/>
</dbReference>
<dbReference type="KEGG" id="sly:544051"/>
<dbReference type="eggNOG" id="ENOG502QRJW">
    <property type="taxonomic scope" value="Eukaryota"/>
</dbReference>
<dbReference type="HOGENOM" id="CLU_016031_2_3_1"/>
<dbReference type="InParanoid" id="P05117"/>
<dbReference type="OMA" id="NVKWTQI"/>
<dbReference type="OrthoDB" id="187139at2759"/>
<dbReference type="PhylomeDB" id="P05117"/>
<dbReference type="BioCyc" id="MetaCyc:MONOMER-2523"/>
<dbReference type="Proteomes" id="UP000004994">
    <property type="component" value="Chromosome 10"/>
</dbReference>
<dbReference type="ExpressionAtlas" id="P05117">
    <property type="expression patterns" value="baseline and differential"/>
</dbReference>
<dbReference type="GO" id="GO:0048046">
    <property type="term" value="C:apoplast"/>
    <property type="evidence" value="ECO:0007669"/>
    <property type="project" value="UniProtKB-SubCell"/>
</dbReference>
<dbReference type="GO" id="GO:0004650">
    <property type="term" value="F:polygalacturonase activity"/>
    <property type="evidence" value="ECO:0007669"/>
    <property type="project" value="UniProtKB-EC"/>
</dbReference>
<dbReference type="GO" id="GO:0009901">
    <property type="term" value="P:anther dehiscence"/>
    <property type="evidence" value="ECO:0000318"/>
    <property type="project" value="GO_Central"/>
</dbReference>
<dbReference type="GO" id="GO:0071555">
    <property type="term" value="P:cell wall organization"/>
    <property type="evidence" value="ECO:0007669"/>
    <property type="project" value="UniProtKB-KW"/>
</dbReference>
<dbReference type="GO" id="GO:0010047">
    <property type="term" value="P:fruit dehiscence"/>
    <property type="evidence" value="ECO:0000318"/>
    <property type="project" value="GO_Central"/>
</dbReference>
<dbReference type="GO" id="GO:0009835">
    <property type="term" value="P:fruit ripening"/>
    <property type="evidence" value="ECO:0007669"/>
    <property type="project" value="UniProtKB-KW"/>
</dbReference>
<dbReference type="GO" id="GO:0045490">
    <property type="term" value="P:pectin catabolic process"/>
    <property type="evidence" value="ECO:0000318"/>
    <property type="project" value="GO_Central"/>
</dbReference>
<dbReference type="FunFam" id="2.160.20.10:FF:000028">
    <property type="entry name" value="Polygalacturonase QRT2"/>
    <property type="match status" value="1"/>
</dbReference>
<dbReference type="Gene3D" id="2.160.20.10">
    <property type="entry name" value="Single-stranded right-handed beta-helix, Pectin lyase-like"/>
    <property type="match status" value="1"/>
</dbReference>
<dbReference type="InterPro" id="IPR000743">
    <property type="entry name" value="Glyco_hydro_28"/>
</dbReference>
<dbReference type="InterPro" id="IPR006626">
    <property type="entry name" value="PbH1"/>
</dbReference>
<dbReference type="InterPro" id="IPR012334">
    <property type="entry name" value="Pectin_lyas_fold"/>
</dbReference>
<dbReference type="InterPro" id="IPR011050">
    <property type="entry name" value="Pectin_lyase_fold/virulence"/>
</dbReference>
<dbReference type="PANTHER" id="PTHR31375">
    <property type="match status" value="1"/>
</dbReference>
<dbReference type="Pfam" id="PF00295">
    <property type="entry name" value="Glyco_hydro_28"/>
    <property type="match status" value="1"/>
</dbReference>
<dbReference type="SMART" id="SM00710">
    <property type="entry name" value="PbH1"/>
    <property type="match status" value="4"/>
</dbReference>
<dbReference type="SUPFAM" id="SSF51126">
    <property type="entry name" value="Pectin lyase-like"/>
    <property type="match status" value="1"/>
</dbReference>
<dbReference type="PROSITE" id="PS00502">
    <property type="entry name" value="POLYGALACTURONASE"/>
    <property type="match status" value="1"/>
</dbReference>
<comment type="function">
    <text evidence="7 12 14">Catalytic subunit of the polygalacturonase isozyme 1 and 2 (PG1 and PG2). Acts in concert with the pectinesterase, in the ripening process. Is involved in cell wall metabolism, specifically in polyuronide degradation. The depolymerization and solubilization of cell wall polyuronides mediated by PG2 during ripening seems to be limited by the beta subunit GP1, probably by recruiting PG2 to form PG1.</text>
</comment>
<comment type="catalytic activity">
    <reaction evidence="13">
        <text>(1,4-alpha-D-galacturonosyl)n+m + H2O = (1,4-alpha-D-galacturonosyl)n + (1,4-alpha-D-galacturonosyl)m.</text>
        <dbReference type="EC" id="3.2.1.15"/>
    </reaction>
</comment>
<comment type="biophysicochemical properties">
    <absorption>
        <max evidence="5 8 9 11">276 nm</max>
        <text>The ratio of Abs(276)/Abs(260)=1.35. These values are for PG1.</text>
    </absorption>
    <kinetics>
        <KM evidence="5 8 9 11">38 uM for polygalacturonic acid (for PG2 at pH 4.6 and 35 degrees Celsius)</KM>
        <KM evidence="5 8 9 11">75 uM for polygalacturonic acid (for PG1 at pH 4.6 and 35 degrees Celsius)</KM>
        <Vmax evidence="5 8 9 11">58.8 umol/min/mg enzyme (for PG2 at pH 4.6 and 35 degrees Celsius)</Vmax>
        <Vmax evidence="5 8 9 11">7.0 umol/min/mg enzyme (for PG2 at pH 3.8 and 25 degrees Celsius)</Vmax>
        <Vmax evidence="5 8 9 11">27.7 umol/min/mg enzyme (for PG1 at pH 4.6 and 35 degrees Celsius)</Vmax>
        <Vmax evidence="5 8 9 11">4.0 umol/min/mg enzyme (for PG1 at pH 3.8 and 25 degrees Celsius)</Vmax>
    </kinetics>
    <phDependence>
        <text evidence="5 8 9 11">Optimum pH is 4.4-4.8 at 35 degrees Celsius. PG1 is resistant to acidic but not to alkaline conditions, at which PG2 is released from the beta subunit.</text>
    </phDependence>
    <temperatureDependence>
        <text evidence="5 8 9 11">Optimum temperature is 55-60 degrees Celsius at pH 4.4. PG1 is more thermostable than PG2.</text>
    </temperatureDependence>
</comment>
<comment type="subunit">
    <text evidence="4 10 11">Monomer PG2 (isoenzymes PG2A and PG2B). Also forms heterodimers called polygalacturonase 1 (PG1) with the beta subunit GP1.</text>
</comment>
<comment type="subcellular location">
    <subcellularLocation>
        <location evidence="7">Secreted</location>
        <location evidence="7">Extracellular space</location>
        <location evidence="7">Apoplast</location>
    </subcellularLocation>
    <subcellularLocation>
        <location evidence="7">Secreted</location>
        <location evidence="7">Cell wall</location>
    </subcellularLocation>
    <text>Associated to the cell wall.</text>
</comment>
<comment type="tissue specificity">
    <text evidence="3 4 15 16">Expressed only in ripening fruits (at protein level).</text>
</comment>
<comment type="developmental stage">
    <text evidence="3 11 12">PG1 appears when fruits start to be coloured. When fruits are orange, both PG2 and PG1 are present. In fully ripe fruit, mostly PG2 is expressed.</text>
</comment>
<comment type="induction">
    <text evidence="3">By ethylene.</text>
</comment>
<comment type="PTM">
    <text evidence="6 7 9">N-glycosylated. PG2B isozyme has a greater degree of glycosylation than PG2A.</text>
</comment>
<comment type="biotechnology">
    <text>The effect of PG can be neutralized by introducing an antisense PG gene by genetic manipulation. The Flavr Savr tomato produced by Calgene (Monsanto) in such a manner has a longer shelf life due to delayed ripening.</text>
</comment>
<comment type="miscellaneous">
    <text>To avoid liquid rheology of tomato juice, temperature and pressure can be increased to inactivate selectively PG2 during the process.</text>
</comment>
<comment type="similarity">
    <text evidence="17">Belongs to the glycosyl hydrolase 28 family.</text>
</comment>
<comment type="sequence caution" evidence="17">
    <conflict type="frameshift">
        <sequence resource="EMBL-CDS" id="CAD44521"/>
    </conflict>
</comment>
<evidence type="ECO:0000255" key="1"/>
<evidence type="ECO:0000255" key="2">
    <source>
        <dbReference type="PROSITE-ProRule" id="PRU10052"/>
    </source>
</evidence>
<evidence type="ECO:0000269" key="3">
    <source>
    </source>
</evidence>
<evidence type="ECO:0000269" key="4">
    <source>
    </source>
</evidence>
<evidence type="ECO:0000269" key="5">
    <source>
    </source>
</evidence>
<evidence type="ECO:0000269" key="6">
    <source>
    </source>
</evidence>
<evidence type="ECO:0000269" key="7">
    <source>
    </source>
</evidence>
<evidence type="ECO:0000269" key="8">
    <source>
    </source>
</evidence>
<evidence type="ECO:0000269" key="9">
    <source>
    </source>
</evidence>
<evidence type="ECO:0000269" key="10">
    <source>
    </source>
</evidence>
<evidence type="ECO:0000269" key="11">
    <source>
    </source>
</evidence>
<evidence type="ECO:0000269" key="12">
    <source>
    </source>
</evidence>
<evidence type="ECO:0000269" key="13">
    <source>
    </source>
</evidence>
<evidence type="ECO:0000269" key="14">
    <source>
    </source>
</evidence>
<evidence type="ECO:0000269" key="15">
    <source ref="2"/>
</evidence>
<evidence type="ECO:0000269" key="16">
    <source ref="4"/>
</evidence>
<evidence type="ECO:0000305" key="17"/>